<name>NADK_BURO0</name>
<gene>
    <name evidence="1" type="primary">nadK</name>
    <name type="ordered locus">Bcenmc03_0714</name>
</gene>
<keyword id="KW-0067">ATP-binding</keyword>
<keyword id="KW-0963">Cytoplasm</keyword>
<keyword id="KW-0418">Kinase</keyword>
<keyword id="KW-0520">NAD</keyword>
<keyword id="KW-0521">NADP</keyword>
<keyword id="KW-0547">Nucleotide-binding</keyword>
<keyword id="KW-0808">Transferase</keyword>
<evidence type="ECO:0000255" key="1">
    <source>
        <dbReference type="HAMAP-Rule" id="MF_00361"/>
    </source>
</evidence>
<dbReference type="EC" id="2.7.1.23" evidence="1"/>
<dbReference type="EMBL" id="CP000958">
    <property type="protein sequence ID" value="ACA89892.1"/>
    <property type="molecule type" value="Genomic_DNA"/>
</dbReference>
<dbReference type="RefSeq" id="WP_012327940.1">
    <property type="nucleotide sequence ID" value="NC_010508.1"/>
</dbReference>
<dbReference type="SMR" id="B1JW12"/>
<dbReference type="GeneID" id="83047513"/>
<dbReference type="KEGG" id="bcm:Bcenmc03_0714"/>
<dbReference type="HOGENOM" id="CLU_008831_0_1_4"/>
<dbReference type="Proteomes" id="UP000002169">
    <property type="component" value="Chromosome 1"/>
</dbReference>
<dbReference type="GO" id="GO:0005737">
    <property type="term" value="C:cytoplasm"/>
    <property type="evidence" value="ECO:0007669"/>
    <property type="project" value="UniProtKB-SubCell"/>
</dbReference>
<dbReference type="GO" id="GO:0005524">
    <property type="term" value="F:ATP binding"/>
    <property type="evidence" value="ECO:0007669"/>
    <property type="project" value="UniProtKB-KW"/>
</dbReference>
<dbReference type="GO" id="GO:0046872">
    <property type="term" value="F:metal ion binding"/>
    <property type="evidence" value="ECO:0007669"/>
    <property type="project" value="UniProtKB-UniRule"/>
</dbReference>
<dbReference type="GO" id="GO:0051287">
    <property type="term" value="F:NAD binding"/>
    <property type="evidence" value="ECO:0007669"/>
    <property type="project" value="UniProtKB-ARBA"/>
</dbReference>
<dbReference type="GO" id="GO:0003951">
    <property type="term" value="F:NAD+ kinase activity"/>
    <property type="evidence" value="ECO:0007669"/>
    <property type="project" value="UniProtKB-UniRule"/>
</dbReference>
<dbReference type="GO" id="GO:0019674">
    <property type="term" value="P:NAD metabolic process"/>
    <property type="evidence" value="ECO:0007669"/>
    <property type="project" value="InterPro"/>
</dbReference>
<dbReference type="GO" id="GO:0006741">
    <property type="term" value="P:NADP biosynthetic process"/>
    <property type="evidence" value="ECO:0007669"/>
    <property type="project" value="UniProtKB-UniRule"/>
</dbReference>
<dbReference type="Gene3D" id="3.40.50.10330">
    <property type="entry name" value="Probable inorganic polyphosphate/atp-NAD kinase, domain 1"/>
    <property type="match status" value="1"/>
</dbReference>
<dbReference type="Gene3D" id="2.60.200.30">
    <property type="entry name" value="Probable inorganic polyphosphate/atp-NAD kinase, domain 2"/>
    <property type="match status" value="1"/>
</dbReference>
<dbReference type="HAMAP" id="MF_00361">
    <property type="entry name" value="NAD_kinase"/>
    <property type="match status" value="1"/>
</dbReference>
<dbReference type="InterPro" id="IPR017438">
    <property type="entry name" value="ATP-NAD_kinase_N"/>
</dbReference>
<dbReference type="InterPro" id="IPR017437">
    <property type="entry name" value="ATP-NAD_kinase_PpnK-typ_C"/>
</dbReference>
<dbReference type="InterPro" id="IPR016064">
    <property type="entry name" value="NAD/diacylglycerol_kinase_sf"/>
</dbReference>
<dbReference type="InterPro" id="IPR002504">
    <property type="entry name" value="NADK"/>
</dbReference>
<dbReference type="NCBIfam" id="NF002561">
    <property type="entry name" value="PRK02155.1"/>
    <property type="match status" value="1"/>
</dbReference>
<dbReference type="PANTHER" id="PTHR20275">
    <property type="entry name" value="NAD KINASE"/>
    <property type="match status" value="1"/>
</dbReference>
<dbReference type="PANTHER" id="PTHR20275:SF0">
    <property type="entry name" value="NAD KINASE"/>
    <property type="match status" value="1"/>
</dbReference>
<dbReference type="Pfam" id="PF01513">
    <property type="entry name" value="NAD_kinase"/>
    <property type="match status" value="1"/>
</dbReference>
<dbReference type="Pfam" id="PF20143">
    <property type="entry name" value="NAD_kinase_C"/>
    <property type="match status" value="1"/>
</dbReference>
<dbReference type="SUPFAM" id="SSF111331">
    <property type="entry name" value="NAD kinase/diacylglycerol kinase-like"/>
    <property type="match status" value="1"/>
</dbReference>
<feature type="chain" id="PRO_1000120833" description="NAD kinase">
    <location>
        <begin position="1"/>
        <end position="300"/>
    </location>
</feature>
<feature type="active site" description="Proton acceptor" evidence="1">
    <location>
        <position position="75"/>
    </location>
</feature>
<feature type="binding site" evidence="1">
    <location>
        <begin position="75"/>
        <end position="76"/>
    </location>
    <ligand>
        <name>NAD(+)</name>
        <dbReference type="ChEBI" id="CHEBI:57540"/>
    </ligand>
</feature>
<feature type="binding site" evidence="1">
    <location>
        <begin position="149"/>
        <end position="150"/>
    </location>
    <ligand>
        <name>NAD(+)</name>
        <dbReference type="ChEBI" id="CHEBI:57540"/>
    </ligand>
</feature>
<feature type="binding site" evidence="1">
    <location>
        <position position="177"/>
    </location>
    <ligand>
        <name>NAD(+)</name>
        <dbReference type="ChEBI" id="CHEBI:57540"/>
    </ligand>
</feature>
<feature type="binding site" evidence="1">
    <location>
        <position position="179"/>
    </location>
    <ligand>
        <name>NAD(+)</name>
        <dbReference type="ChEBI" id="CHEBI:57540"/>
    </ligand>
</feature>
<feature type="binding site" evidence="1">
    <location>
        <begin position="190"/>
        <end position="195"/>
    </location>
    <ligand>
        <name>NAD(+)</name>
        <dbReference type="ChEBI" id="CHEBI:57540"/>
    </ligand>
</feature>
<feature type="binding site" evidence="1">
    <location>
        <position position="214"/>
    </location>
    <ligand>
        <name>NAD(+)</name>
        <dbReference type="ChEBI" id="CHEBI:57540"/>
    </ligand>
</feature>
<feature type="binding site" evidence="1">
    <location>
        <position position="248"/>
    </location>
    <ligand>
        <name>NAD(+)</name>
        <dbReference type="ChEBI" id="CHEBI:57540"/>
    </ligand>
</feature>
<protein>
    <recommendedName>
        <fullName evidence="1">NAD kinase</fullName>
        <ecNumber evidence="1">2.7.1.23</ecNumber>
    </recommendedName>
    <alternativeName>
        <fullName evidence="1">ATP-dependent NAD kinase</fullName>
    </alternativeName>
</protein>
<proteinExistence type="inferred from homology"/>
<sequence length="300" mass="32290">MKTGNQFKTVALVGRSNTPGIAEPLATLADSIATLGFEVVFEGDTAREIGIAGYPALTPAEIGARADVAIVLGGDGTMLGIGRQLAPYRTPLIGINHGRLGFITDIAASDMQALVPVMLAGKFEREERSLLEARIVRDGEPIYHALAFNDVVVNRSGFSGMVELRASVDGRYMYNQRSDGLIVATPTGSTAYALSSAGPILHPQLAGIVLVPIAPHALSNRPIVLPDDSKIAIQIVGGRDVNVNFDMQSFTSLELNDTIEVRRSKHTVPFLHPIGYSYYTTLRKKLHWNEHASNEDDKAS</sequence>
<organism>
    <name type="scientific">Burkholderia orbicola (strain MC0-3)</name>
    <dbReference type="NCBI Taxonomy" id="406425"/>
    <lineage>
        <taxon>Bacteria</taxon>
        <taxon>Pseudomonadati</taxon>
        <taxon>Pseudomonadota</taxon>
        <taxon>Betaproteobacteria</taxon>
        <taxon>Burkholderiales</taxon>
        <taxon>Burkholderiaceae</taxon>
        <taxon>Burkholderia</taxon>
        <taxon>Burkholderia cepacia complex</taxon>
        <taxon>Burkholderia orbicola</taxon>
    </lineage>
</organism>
<comment type="function">
    <text evidence="1">Involved in the regulation of the intracellular balance of NAD and NADP, and is a key enzyme in the biosynthesis of NADP. Catalyzes specifically the phosphorylation on 2'-hydroxyl of the adenosine moiety of NAD to yield NADP.</text>
</comment>
<comment type="catalytic activity">
    <reaction evidence="1">
        <text>NAD(+) + ATP = ADP + NADP(+) + H(+)</text>
        <dbReference type="Rhea" id="RHEA:18629"/>
        <dbReference type="ChEBI" id="CHEBI:15378"/>
        <dbReference type="ChEBI" id="CHEBI:30616"/>
        <dbReference type="ChEBI" id="CHEBI:57540"/>
        <dbReference type="ChEBI" id="CHEBI:58349"/>
        <dbReference type="ChEBI" id="CHEBI:456216"/>
        <dbReference type="EC" id="2.7.1.23"/>
    </reaction>
</comment>
<comment type="cofactor">
    <cofactor evidence="1">
        <name>a divalent metal cation</name>
        <dbReference type="ChEBI" id="CHEBI:60240"/>
    </cofactor>
</comment>
<comment type="subcellular location">
    <subcellularLocation>
        <location evidence="1">Cytoplasm</location>
    </subcellularLocation>
</comment>
<comment type="similarity">
    <text evidence="1">Belongs to the NAD kinase family.</text>
</comment>
<reference key="1">
    <citation type="submission" date="2008-02" db="EMBL/GenBank/DDBJ databases">
        <title>Complete sequence of chromosome 1 of Burkholderia cenocepacia MC0-3.</title>
        <authorList>
            <person name="Copeland A."/>
            <person name="Lucas S."/>
            <person name="Lapidus A."/>
            <person name="Barry K."/>
            <person name="Bruce D."/>
            <person name="Goodwin L."/>
            <person name="Glavina del Rio T."/>
            <person name="Dalin E."/>
            <person name="Tice H."/>
            <person name="Pitluck S."/>
            <person name="Chain P."/>
            <person name="Malfatti S."/>
            <person name="Shin M."/>
            <person name="Vergez L."/>
            <person name="Schmutz J."/>
            <person name="Larimer F."/>
            <person name="Land M."/>
            <person name="Hauser L."/>
            <person name="Kyrpides N."/>
            <person name="Mikhailova N."/>
            <person name="Tiedje J."/>
            <person name="Richardson P."/>
        </authorList>
    </citation>
    <scope>NUCLEOTIDE SEQUENCE [LARGE SCALE GENOMIC DNA]</scope>
    <source>
        <strain>MC0-3</strain>
    </source>
</reference>
<accession>B1JW12</accession>